<name>F1712_MOUSE</name>
<organism>
    <name type="scientific">Mus musculus</name>
    <name type="common">Mouse</name>
    <dbReference type="NCBI Taxonomy" id="10090"/>
    <lineage>
        <taxon>Eukaryota</taxon>
        <taxon>Metazoa</taxon>
        <taxon>Chordata</taxon>
        <taxon>Craniata</taxon>
        <taxon>Vertebrata</taxon>
        <taxon>Euteleostomi</taxon>
        <taxon>Mammalia</taxon>
        <taxon>Eutheria</taxon>
        <taxon>Euarchontoglires</taxon>
        <taxon>Glires</taxon>
        <taxon>Rodentia</taxon>
        <taxon>Myomorpha</taxon>
        <taxon>Muroidea</taxon>
        <taxon>Muridae</taxon>
        <taxon>Murinae</taxon>
        <taxon>Mus</taxon>
        <taxon>Mus</taxon>
    </lineage>
</organism>
<sequence length="822" mass="87487">MPPPSGPGVLARLLPLLGLLLGGASRAPGKSPPEPPSPQEILIKVQVYVSGELVPLARASVDVFGNRTLLAAGTTDSEGVATLPLSYRLGTWVLVTAARPGFLTNSVPWRVDKLPLYASVSLYLLPERPATLILYEDLVHILLGSPGARSQPWVQFQRRAARLPVSSTYSQLWASLTPASTQQEMRAFPAFLGTEASSSGNGSWLELIPLAAVSVHLLTGNGTEVPLSGPIHLSLPVPSEPRALAVGTSIPAWRFDPKSGLWVRNGTGVIRKEGRQLYWTFVSPQLGYWVAAMASPTSGLVTITSGIQDIGTYHTIFLLTILAALALLVLILLCLLIYYCRRRCLKPRQQHRKLQLSGPSDNKRDQATSMSQLHLICGGPLEPTSSGDPEAPPPGSLHSAFSSSRDLASSRDDFFRAKPRSASRPAAEPPGARTVEGAGLKSARSVEGPGGLEPSLDEYRRGPAGAAAFLHEPPSPPPSFDHYLGHKGAAESKTPDFLLSQSVDQLARPPSLSQPGQLIFCGSIDHLKDNVYRNVMPTLVIPAHYVRLGGEAGAAGVGDEATPPEGSAAGPARPFPQPDPQRPLMQGHAGAGGDSGGGEGWGGGRSAPVSGSVTIPVLFNESTMAQLNGELQALTEKKLLELGVKPHPRAWFVSLDGRSNSQVRHSYIDLQAGSGGRSTDASLDSGVDVHEARPARRRLPREERERAQLPAPPPPAPPRLALSEDTEPSSSESRTGLCSPEDNSLTPLLDEVVAPEGRAATVPRGRGRSRGDSSRSSASELRRDSLTSPEDELGAEVGDEAGDKKSPWQRREERPLMVFNVK</sequence>
<feature type="signal peptide" evidence="1">
    <location>
        <begin position="1"/>
        <end position="29"/>
    </location>
</feature>
<feature type="chain" id="PRO_0000328772" description="Protein FAM171A2">
    <location>
        <begin position="30"/>
        <end position="822"/>
    </location>
</feature>
<feature type="topological domain" description="Extracellular" evidence="1">
    <location>
        <begin position="30"/>
        <end position="315"/>
    </location>
</feature>
<feature type="transmembrane region" description="Helical" evidence="1">
    <location>
        <begin position="316"/>
        <end position="336"/>
    </location>
</feature>
<feature type="topological domain" description="Cytoplasmic" evidence="1">
    <location>
        <begin position="337"/>
        <end position="822"/>
    </location>
</feature>
<feature type="region of interest" description="Disordered" evidence="2">
    <location>
        <begin position="378"/>
        <end position="403"/>
    </location>
</feature>
<feature type="region of interest" description="Disordered" evidence="2">
    <location>
        <begin position="416"/>
        <end position="459"/>
    </location>
</feature>
<feature type="region of interest" description="Disordered" evidence="2">
    <location>
        <begin position="554"/>
        <end position="607"/>
    </location>
</feature>
<feature type="region of interest" description="Disordered" evidence="2">
    <location>
        <begin position="669"/>
        <end position="822"/>
    </location>
</feature>
<feature type="compositionally biased region" description="Low complexity" evidence="2">
    <location>
        <begin position="420"/>
        <end position="433"/>
    </location>
</feature>
<feature type="compositionally biased region" description="Gly residues" evidence="2">
    <location>
        <begin position="589"/>
        <end position="605"/>
    </location>
</feature>
<feature type="compositionally biased region" description="Basic and acidic residues" evidence="2">
    <location>
        <begin position="687"/>
        <end position="707"/>
    </location>
</feature>
<feature type="compositionally biased region" description="Polar residues" evidence="2">
    <location>
        <begin position="728"/>
        <end position="746"/>
    </location>
</feature>
<feature type="compositionally biased region" description="Acidic residues" evidence="2">
    <location>
        <begin position="789"/>
        <end position="800"/>
    </location>
</feature>
<feature type="compositionally biased region" description="Basic and acidic residues" evidence="2">
    <location>
        <begin position="801"/>
        <end position="815"/>
    </location>
</feature>
<feature type="modified residue" description="Phosphoserine" evidence="5">
    <location>
        <position position="369"/>
    </location>
</feature>
<feature type="modified residue" description="Phosphoserine" evidence="5">
    <location>
        <position position="371"/>
    </location>
</feature>
<feature type="modified residue" description="Phosphoserine" evidence="5">
    <location>
        <position position="785"/>
    </location>
</feature>
<feature type="glycosylation site" description="N-linked (GlcNAc...) asparagine" evidence="1">
    <location>
        <position position="66"/>
    </location>
</feature>
<feature type="glycosylation site" description="N-linked (GlcNAc...) asparagine" evidence="1">
    <location>
        <position position="201"/>
    </location>
</feature>
<feature type="glycosylation site" description="N-linked (GlcNAc...) asparagine" evidence="1">
    <location>
        <position position="221"/>
    </location>
</feature>
<feature type="glycosylation site" description="N-linked (GlcNAc...) asparagine" evidence="1">
    <location>
        <position position="265"/>
    </location>
</feature>
<feature type="splice variant" id="VSP_032783" description="In isoform 2." evidence="3">
    <location>
        <begin position="1"/>
        <end position="184"/>
    </location>
</feature>
<accession>A2A699</accession>
<accession>B7ZC48</accession>
<accession>Q05CH6</accession>
<accession>Q6P2L1</accession>
<comment type="subcellular location">
    <subcellularLocation>
        <location evidence="4">Membrane</location>
        <topology evidence="4">Single-pass type I membrane protein</topology>
    </subcellularLocation>
</comment>
<comment type="alternative products">
    <event type="alternative splicing"/>
    <isoform>
        <id>A2A699-1</id>
        <name>1</name>
        <sequence type="displayed"/>
    </isoform>
    <isoform>
        <id>A2A699-2</id>
        <name>2</name>
        <sequence type="described" ref="VSP_032783"/>
    </isoform>
</comment>
<comment type="similarity">
    <text evidence="4">Belongs to the FAM171 family.</text>
</comment>
<protein>
    <recommendedName>
        <fullName>Protein FAM171A2</fullName>
    </recommendedName>
</protein>
<gene>
    <name type="primary">Fam171a2</name>
</gene>
<evidence type="ECO:0000255" key="1"/>
<evidence type="ECO:0000256" key="2">
    <source>
        <dbReference type="SAM" id="MobiDB-lite"/>
    </source>
</evidence>
<evidence type="ECO:0000303" key="3">
    <source>
    </source>
</evidence>
<evidence type="ECO:0000305" key="4"/>
<evidence type="ECO:0007744" key="5">
    <source>
    </source>
</evidence>
<proteinExistence type="evidence at protein level"/>
<keyword id="KW-0025">Alternative splicing</keyword>
<keyword id="KW-0325">Glycoprotein</keyword>
<keyword id="KW-0472">Membrane</keyword>
<keyword id="KW-0597">Phosphoprotein</keyword>
<keyword id="KW-1185">Reference proteome</keyword>
<keyword id="KW-0732">Signal</keyword>
<keyword id="KW-0812">Transmembrane</keyword>
<keyword id="KW-1133">Transmembrane helix</keyword>
<dbReference type="EMBL" id="AL596258">
    <property type="status" value="NOT_ANNOTATED_CDS"/>
    <property type="molecule type" value="Genomic_DNA"/>
</dbReference>
<dbReference type="EMBL" id="BC025575">
    <property type="protein sequence ID" value="AAH25575.1"/>
    <property type="molecule type" value="mRNA"/>
</dbReference>
<dbReference type="EMBL" id="BC064455">
    <property type="protein sequence ID" value="AAH64455.1"/>
    <property type="molecule type" value="mRNA"/>
</dbReference>
<dbReference type="CCDS" id="CCDS36344.1">
    <molecule id="A2A699-1"/>
</dbReference>
<dbReference type="RefSeq" id="NP_954670.2">
    <molecule id="A2A699-1"/>
    <property type="nucleotide sequence ID" value="NM_199200.2"/>
</dbReference>
<dbReference type="BioGRID" id="229868">
    <property type="interactions" value="10"/>
</dbReference>
<dbReference type="FunCoup" id="A2A699">
    <property type="interactions" value="125"/>
</dbReference>
<dbReference type="IntAct" id="A2A699">
    <property type="interactions" value="4"/>
</dbReference>
<dbReference type="MINT" id="A2A699"/>
<dbReference type="STRING" id="10090.ENSMUSP00000038486"/>
<dbReference type="GlyConnect" id="2627">
    <property type="glycosylation" value="4 N-Linked glycans (2 sites)"/>
</dbReference>
<dbReference type="GlyCosmos" id="A2A699">
    <property type="glycosylation" value="4 sites, 4 glycans"/>
</dbReference>
<dbReference type="GlyGen" id="A2A699">
    <property type="glycosylation" value="6 sites, 5 N-linked glycans (2 sites), 1 O-linked glycan (1 site)"/>
</dbReference>
<dbReference type="iPTMnet" id="A2A699"/>
<dbReference type="PhosphoSitePlus" id="A2A699"/>
<dbReference type="SwissPalm" id="A2A699"/>
<dbReference type="jPOST" id="A2A699"/>
<dbReference type="PaxDb" id="10090-ENSMUSP00000038486"/>
<dbReference type="PeptideAtlas" id="A2A699"/>
<dbReference type="ProteomicsDB" id="271826">
    <molecule id="A2A699-1"/>
</dbReference>
<dbReference type="ProteomicsDB" id="271827">
    <molecule id="A2A699-2"/>
</dbReference>
<dbReference type="Pumba" id="A2A699"/>
<dbReference type="Antibodypedia" id="8250">
    <property type="antibodies" value="23 antibodies from 12 providers"/>
</dbReference>
<dbReference type="DNASU" id="217219"/>
<dbReference type="Ensembl" id="ENSMUST00000049057.5">
    <molecule id="A2A699-1"/>
    <property type="protein sequence ID" value="ENSMUSP00000038486.5"/>
    <property type="gene ID" value="ENSMUSG00000034685.5"/>
</dbReference>
<dbReference type="GeneID" id="217219"/>
<dbReference type="KEGG" id="mmu:217219"/>
<dbReference type="UCSC" id="uc007lrw.2">
    <molecule id="A2A699-1"/>
    <property type="organism name" value="mouse"/>
</dbReference>
<dbReference type="AGR" id="MGI:2448496"/>
<dbReference type="CTD" id="284069"/>
<dbReference type="MGI" id="MGI:2448496">
    <property type="gene designation" value="Fam171a2"/>
</dbReference>
<dbReference type="VEuPathDB" id="HostDB:ENSMUSG00000034685"/>
<dbReference type="eggNOG" id="ENOG502QTDH">
    <property type="taxonomic scope" value="Eukaryota"/>
</dbReference>
<dbReference type="GeneTree" id="ENSGT00950000183184"/>
<dbReference type="HOGENOM" id="CLU_019729_0_0_1"/>
<dbReference type="InParanoid" id="A2A699"/>
<dbReference type="OMA" id="HLICAGP"/>
<dbReference type="OrthoDB" id="8762914at2759"/>
<dbReference type="PhylomeDB" id="A2A699"/>
<dbReference type="TreeFam" id="TF331338"/>
<dbReference type="BioGRID-ORCS" id="217219">
    <property type="hits" value="2 hits in 78 CRISPR screens"/>
</dbReference>
<dbReference type="CD-CODE" id="CE726F99">
    <property type="entry name" value="Postsynaptic density"/>
</dbReference>
<dbReference type="ChiTaRS" id="Fam171a2">
    <property type="organism name" value="mouse"/>
</dbReference>
<dbReference type="PRO" id="PR:A2A699"/>
<dbReference type="Proteomes" id="UP000000589">
    <property type="component" value="Chromosome 11"/>
</dbReference>
<dbReference type="RNAct" id="A2A699">
    <property type="molecule type" value="protein"/>
</dbReference>
<dbReference type="Bgee" id="ENSMUSG00000034685">
    <property type="expression patterns" value="Expressed in cortical plate and 141 other cell types or tissues"/>
</dbReference>
<dbReference type="GO" id="GO:0016020">
    <property type="term" value="C:membrane"/>
    <property type="evidence" value="ECO:0007669"/>
    <property type="project" value="UniProtKB-SubCell"/>
</dbReference>
<dbReference type="InterPro" id="IPR018890">
    <property type="entry name" value="FAM171"/>
</dbReference>
<dbReference type="InterPro" id="IPR049175">
    <property type="entry name" value="FAM171_C"/>
</dbReference>
<dbReference type="InterPro" id="IPR048530">
    <property type="entry name" value="FAM171_N"/>
</dbReference>
<dbReference type="PANTHER" id="PTHR31626:SF3">
    <property type="entry name" value="PROTEIN FAM171A2"/>
    <property type="match status" value="1"/>
</dbReference>
<dbReference type="PANTHER" id="PTHR31626">
    <property type="entry name" value="SUSHI DOMAIN-CONTAINING PROTEIN"/>
    <property type="match status" value="1"/>
</dbReference>
<dbReference type="Pfam" id="PF20771">
    <property type="entry name" value="FAM171A1-2-B_C"/>
    <property type="match status" value="1"/>
</dbReference>
<dbReference type="Pfam" id="PF10577">
    <property type="entry name" value="FAM171A1-2-B_N"/>
    <property type="match status" value="1"/>
</dbReference>
<reference key="1">
    <citation type="journal article" date="2009" name="PLoS Biol.">
        <title>Lineage-specific biology revealed by a finished genome assembly of the mouse.</title>
        <authorList>
            <person name="Church D.M."/>
            <person name="Goodstadt L."/>
            <person name="Hillier L.W."/>
            <person name="Zody M.C."/>
            <person name="Goldstein S."/>
            <person name="She X."/>
            <person name="Bult C.J."/>
            <person name="Agarwala R."/>
            <person name="Cherry J.L."/>
            <person name="DiCuccio M."/>
            <person name="Hlavina W."/>
            <person name="Kapustin Y."/>
            <person name="Meric P."/>
            <person name="Maglott D."/>
            <person name="Birtle Z."/>
            <person name="Marques A.C."/>
            <person name="Graves T."/>
            <person name="Zhou S."/>
            <person name="Teague B."/>
            <person name="Potamousis K."/>
            <person name="Churas C."/>
            <person name="Place M."/>
            <person name="Herschleb J."/>
            <person name="Runnheim R."/>
            <person name="Forrest D."/>
            <person name="Amos-Landgraf J."/>
            <person name="Schwartz D.C."/>
            <person name="Cheng Z."/>
            <person name="Lindblad-Toh K."/>
            <person name="Eichler E.E."/>
            <person name="Ponting C.P."/>
        </authorList>
    </citation>
    <scope>NUCLEOTIDE SEQUENCE [LARGE SCALE GENOMIC DNA]</scope>
    <source>
        <strain>C57BL/6J</strain>
    </source>
</reference>
<reference key="2">
    <citation type="journal article" date="2004" name="Genome Res.">
        <title>The status, quality, and expansion of the NIH full-length cDNA project: the Mammalian Gene Collection (MGC).</title>
        <authorList>
            <consortium name="The MGC Project Team"/>
        </authorList>
    </citation>
    <scope>NUCLEOTIDE SEQUENCE [LARGE SCALE MRNA] (ISOFORM 2)</scope>
    <scope>NUCLEOTIDE SEQUENCE [LARGE SCALE MRNA] OF 1-507 (ISOFORM 1)</scope>
    <source>
        <strain>C57BL/6J</strain>
        <strain>FVB/N</strain>
        <tissue>Brain</tissue>
        <tissue>Mammary tumor</tissue>
    </source>
</reference>
<reference key="3">
    <citation type="journal article" date="2006" name="Mol. Cell. Proteomics">
        <title>Comprehensive identification of phosphorylation sites in postsynaptic density preparations.</title>
        <authorList>
            <person name="Trinidad J.C."/>
            <person name="Specht C.G."/>
            <person name="Thalhammer A."/>
            <person name="Schoepfer R."/>
            <person name="Burlingame A.L."/>
        </authorList>
    </citation>
    <scope>IDENTIFICATION BY MASS SPECTROMETRY [LARGE SCALE ANALYSIS]</scope>
    <source>
        <tissue>Brain</tissue>
    </source>
</reference>
<reference key="4">
    <citation type="journal article" date="2010" name="Cell">
        <title>A tissue-specific atlas of mouse protein phosphorylation and expression.</title>
        <authorList>
            <person name="Huttlin E.L."/>
            <person name="Jedrychowski M.P."/>
            <person name="Elias J.E."/>
            <person name="Goswami T."/>
            <person name="Rad R."/>
            <person name="Beausoleil S.A."/>
            <person name="Villen J."/>
            <person name="Haas W."/>
            <person name="Sowa M.E."/>
            <person name="Gygi S.P."/>
        </authorList>
    </citation>
    <scope>PHOSPHORYLATION [LARGE SCALE ANALYSIS] AT SER-369; SER-371 AND SER-785</scope>
    <scope>IDENTIFICATION BY MASS SPECTROMETRY [LARGE SCALE ANALYSIS]</scope>
    <source>
        <tissue>Brain</tissue>
        <tissue>Kidney</tissue>
    </source>
</reference>